<keyword id="KW-0010">Activator</keyword>
<keyword id="KW-0963">Cytoplasm</keyword>
<keyword id="KW-0678">Repressor</keyword>
<keyword id="KW-0694">RNA-binding</keyword>
<keyword id="KW-0810">Translation regulation</keyword>
<proteinExistence type="inferred from homology"/>
<accession>B4TF10</accession>
<reference key="1">
    <citation type="journal article" date="2011" name="J. Bacteriol.">
        <title>Comparative genomics of 28 Salmonella enterica isolates: evidence for CRISPR-mediated adaptive sublineage evolution.</title>
        <authorList>
            <person name="Fricke W.F."/>
            <person name="Mammel M.K."/>
            <person name="McDermott P.F."/>
            <person name="Tartera C."/>
            <person name="White D.G."/>
            <person name="Leclerc J.E."/>
            <person name="Ravel J."/>
            <person name="Cebula T.A."/>
        </authorList>
    </citation>
    <scope>NUCLEOTIDE SEQUENCE [LARGE SCALE GENOMIC DNA]</scope>
    <source>
        <strain>SL476</strain>
    </source>
</reference>
<evidence type="ECO:0000255" key="1">
    <source>
        <dbReference type="HAMAP-Rule" id="MF_00167"/>
    </source>
</evidence>
<feature type="chain" id="PRO_1000097505" description="Translational regulator CsrA">
    <location>
        <begin position="1"/>
        <end position="61"/>
    </location>
</feature>
<protein>
    <recommendedName>
        <fullName evidence="1">Translational regulator CsrA</fullName>
    </recommendedName>
    <alternativeName>
        <fullName evidence="1">Carbon storage regulator</fullName>
    </alternativeName>
</protein>
<organism>
    <name type="scientific">Salmonella heidelberg (strain SL476)</name>
    <dbReference type="NCBI Taxonomy" id="454169"/>
    <lineage>
        <taxon>Bacteria</taxon>
        <taxon>Pseudomonadati</taxon>
        <taxon>Pseudomonadota</taxon>
        <taxon>Gammaproteobacteria</taxon>
        <taxon>Enterobacterales</taxon>
        <taxon>Enterobacteriaceae</taxon>
        <taxon>Salmonella</taxon>
    </lineage>
</organism>
<sequence>MLILTRRVGETLMIGDEVTVTVLGVKGNQVRIGVNAPKEVSVHREEIYQRIQAEKSQQSSY</sequence>
<name>CSRA_SALHS</name>
<dbReference type="EMBL" id="CP001120">
    <property type="protein sequence ID" value="ACF68295.1"/>
    <property type="molecule type" value="Genomic_DNA"/>
</dbReference>
<dbReference type="RefSeq" id="WP_000906486.1">
    <property type="nucleotide sequence ID" value="NC_011083.1"/>
</dbReference>
<dbReference type="SMR" id="B4TF10"/>
<dbReference type="GeneID" id="98389839"/>
<dbReference type="KEGG" id="seh:SeHA_C3012"/>
<dbReference type="HOGENOM" id="CLU_164837_2_1_6"/>
<dbReference type="Proteomes" id="UP000001866">
    <property type="component" value="Chromosome"/>
</dbReference>
<dbReference type="GO" id="GO:0005829">
    <property type="term" value="C:cytosol"/>
    <property type="evidence" value="ECO:0007669"/>
    <property type="project" value="TreeGrafter"/>
</dbReference>
<dbReference type="GO" id="GO:0048027">
    <property type="term" value="F:mRNA 5'-UTR binding"/>
    <property type="evidence" value="ECO:0007669"/>
    <property type="project" value="UniProtKB-UniRule"/>
</dbReference>
<dbReference type="GO" id="GO:0006402">
    <property type="term" value="P:mRNA catabolic process"/>
    <property type="evidence" value="ECO:0007669"/>
    <property type="project" value="InterPro"/>
</dbReference>
<dbReference type="GO" id="GO:0045947">
    <property type="term" value="P:negative regulation of translational initiation"/>
    <property type="evidence" value="ECO:0007669"/>
    <property type="project" value="UniProtKB-UniRule"/>
</dbReference>
<dbReference type="GO" id="GO:0045948">
    <property type="term" value="P:positive regulation of translational initiation"/>
    <property type="evidence" value="ECO:0007669"/>
    <property type="project" value="UniProtKB-UniRule"/>
</dbReference>
<dbReference type="GO" id="GO:0006109">
    <property type="term" value="P:regulation of carbohydrate metabolic process"/>
    <property type="evidence" value="ECO:0007669"/>
    <property type="project" value="UniProtKB-UniRule"/>
</dbReference>
<dbReference type="FunFam" id="2.60.40.4380:FF:000001">
    <property type="entry name" value="Translational regulator CsrA"/>
    <property type="match status" value="1"/>
</dbReference>
<dbReference type="Gene3D" id="2.60.40.4380">
    <property type="entry name" value="Translational regulator CsrA"/>
    <property type="match status" value="1"/>
</dbReference>
<dbReference type="HAMAP" id="MF_00167">
    <property type="entry name" value="CsrA"/>
    <property type="match status" value="1"/>
</dbReference>
<dbReference type="InterPro" id="IPR003751">
    <property type="entry name" value="CsrA"/>
</dbReference>
<dbReference type="InterPro" id="IPR036107">
    <property type="entry name" value="CsrA_sf"/>
</dbReference>
<dbReference type="NCBIfam" id="TIGR00202">
    <property type="entry name" value="csrA"/>
    <property type="match status" value="1"/>
</dbReference>
<dbReference type="NCBIfam" id="NF002469">
    <property type="entry name" value="PRK01712.1"/>
    <property type="match status" value="1"/>
</dbReference>
<dbReference type="PANTHER" id="PTHR34984">
    <property type="entry name" value="CARBON STORAGE REGULATOR"/>
    <property type="match status" value="1"/>
</dbReference>
<dbReference type="PANTHER" id="PTHR34984:SF1">
    <property type="entry name" value="CARBON STORAGE REGULATOR"/>
    <property type="match status" value="1"/>
</dbReference>
<dbReference type="Pfam" id="PF02599">
    <property type="entry name" value="CsrA"/>
    <property type="match status" value="1"/>
</dbReference>
<dbReference type="SUPFAM" id="SSF117130">
    <property type="entry name" value="CsrA-like"/>
    <property type="match status" value="1"/>
</dbReference>
<gene>
    <name evidence="1" type="primary">csrA</name>
    <name type="ordered locus">SeHA_C3012</name>
</gene>
<comment type="function">
    <text evidence="1">A key translational regulator that binds mRNA to regulate translation initiation and/or mRNA stability. Mediates global changes in gene expression, shifting from rapid growth to stress survival by linking envelope stress, the stringent response and the catabolite repression systems. Usually binds in the 5'-UTR; binding at or near the Shine-Dalgarno sequence prevents ribosome-binding, repressing translation, binding elsewhere in the 5'-UTR can activate translation and/or stabilize the mRNA. Its function is antagonized by small RNA(s).</text>
</comment>
<comment type="subunit">
    <text evidence="1">Homodimer; the beta-strands of each monomer intercalate to form a hydrophobic core, while the alpha-helices form wings that extend away from the core.</text>
</comment>
<comment type="subcellular location">
    <subcellularLocation>
        <location evidence="1">Cytoplasm</location>
    </subcellularLocation>
</comment>
<comment type="similarity">
    <text evidence="1">Belongs to the CsrA/RsmA family.</text>
</comment>